<accession>Q39WD1</accession>
<evidence type="ECO:0000250" key="1"/>
<evidence type="ECO:0000255" key="2">
    <source>
        <dbReference type="HAMAP-Rule" id="MF_00103"/>
    </source>
</evidence>
<sequence length="267" mass="29698">MPELPEVELTRRRLERELTGKRIDRVVVRTPKLRFPIPQELHVSLPGRTVRSVGRRGKYLLFDCETGWLIVHLGMTGFLRLVAGTAPPGKHDHLDIVFADGTVLRFHDPRKFGTVAWTTDAPATHPLLAAIGPEPLTATFDGAYLFAVTRTRRVAVKQLLMNAAIVAGVGNIYANEALFRAGIRPDRPASSLGRPECERLARTVREVLQESIDQGSTYRVEEETVAYHPLNFDVYGRGTDACTRCGGALEEIRLGNRSTVFCPRCQT</sequence>
<feature type="initiator methionine" description="Removed" evidence="1">
    <location>
        <position position="1"/>
    </location>
</feature>
<feature type="chain" id="PRO_0000228435" description="Formamidopyrimidine-DNA glycosylase">
    <location>
        <begin position="2"/>
        <end position="267"/>
    </location>
</feature>
<feature type="zinc finger region" description="FPG-type" evidence="2">
    <location>
        <begin position="233"/>
        <end position="267"/>
    </location>
</feature>
<feature type="active site" description="Schiff-base intermediate with DNA" evidence="2">
    <location>
        <position position="2"/>
    </location>
</feature>
<feature type="active site" description="Proton donor" evidence="2">
    <location>
        <position position="3"/>
    </location>
</feature>
<feature type="active site" description="Proton donor; for beta-elimination activity" evidence="2">
    <location>
        <position position="58"/>
    </location>
</feature>
<feature type="active site" description="Proton donor; for delta-elimination activity" evidence="2">
    <location>
        <position position="257"/>
    </location>
</feature>
<feature type="binding site" evidence="2">
    <location>
        <position position="91"/>
    </location>
    <ligand>
        <name>DNA</name>
        <dbReference type="ChEBI" id="CHEBI:16991"/>
    </ligand>
</feature>
<feature type="binding site" evidence="2">
    <location>
        <position position="110"/>
    </location>
    <ligand>
        <name>DNA</name>
        <dbReference type="ChEBI" id="CHEBI:16991"/>
    </ligand>
</feature>
<feature type="binding site" evidence="2">
    <location>
        <position position="152"/>
    </location>
    <ligand>
        <name>DNA</name>
        <dbReference type="ChEBI" id="CHEBI:16991"/>
    </ligand>
</feature>
<proteinExistence type="inferred from homology"/>
<name>FPG_GEOMG</name>
<protein>
    <recommendedName>
        <fullName evidence="2">Formamidopyrimidine-DNA glycosylase</fullName>
        <shortName evidence="2">Fapy-DNA glycosylase</shortName>
        <ecNumber evidence="2">3.2.2.23</ecNumber>
    </recommendedName>
    <alternativeName>
        <fullName evidence="2">DNA-(apurinic or apyrimidinic site) lyase MutM</fullName>
        <shortName evidence="2">AP lyase MutM</shortName>
        <ecNumber evidence="2">4.2.99.18</ecNumber>
    </alternativeName>
</protein>
<organism>
    <name type="scientific">Geobacter metallireducens (strain ATCC 53774 / DSM 7210 / GS-15)</name>
    <dbReference type="NCBI Taxonomy" id="269799"/>
    <lineage>
        <taxon>Bacteria</taxon>
        <taxon>Pseudomonadati</taxon>
        <taxon>Thermodesulfobacteriota</taxon>
        <taxon>Desulfuromonadia</taxon>
        <taxon>Geobacterales</taxon>
        <taxon>Geobacteraceae</taxon>
        <taxon>Geobacter</taxon>
    </lineage>
</organism>
<keyword id="KW-0227">DNA damage</keyword>
<keyword id="KW-0234">DNA repair</keyword>
<keyword id="KW-0238">DNA-binding</keyword>
<keyword id="KW-0326">Glycosidase</keyword>
<keyword id="KW-0378">Hydrolase</keyword>
<keyword id="KW-0456">Lyase</keyword>
<keyword id="KW-0479">Metal-binding</keyword>
<keyword id="KW-0511">Multifunctional enzyme</keyword>
<keyword id="KW-1185">Reference proteome</keyword>
<keyword id="KW-0862">Zinc</keyword>
<keyword id="KW-0863">Zinc-finger</keyword>
<comment type="function">
    <text evidence="2">Involved in base excision repair of DNA damaged by oxidation or by mutagenic agents. Acts as a DNA glycosylase that recognizes and removes damaged bases. Has a preference for oxidized purines, such as 7,8-dihydro-8-oxoguanine (8-oxoG). Has AP (apurinic/apyrimidinic) lyase activity and introduces nicks in the DNA strand. Cleaves the DNA backbone by beta-delta elimination to generate a single-strand break at the site of the removed base with both 3'- and 5'-phosphates.</text>
</comment>
<comment type="catalytic activity">
    <reaction evidence="2">
        <text>Hydrolysis of DNA containing ring-opened 7-methylguanine residues, releasing 2,6-diamino-4-hydroxy-5-(N-methyl)formamidopyrimidine.</text>
        <dbReference type="EC" id="3.2.2.23"/>
    </reaction>
</comment>
<comment type="catalytic activity">
    <reaction evidence="2">
        <text>2'-deoxyribonucleotide-(2'-deoxyribose 5'-phosphate)-2'-deoxyribonucleotide-DNA = a 3'-end 2'-deoxyribonucleotide-(2,3-dehydro-2,3-deoxyribose 5'-phosphate)-DNA + a 5'-end 5'-phospho-2'-deoxyribonucleoside-DNA + H(+)</text>
        <dbReference type="Rhea" id="RHEA:66592"/>
        <dbReference type="Rhea" id="RHEA-COMP:13180"/>
        <dbReference type="Rhea" id="RHEA-COMP:16897"/>
        <dbReference type="Rhea" id="RHEA-COMP:17067"/>
        <dbReference type="ChEBI" id="CHEBI:15378"/>
        <dbReference type="ChEBI" id="CHEBI:136412"/>
        <dbReference type="ChEBI" id="CHEBI:157695"/>
        <dbReference type="ChEBI" id="CHEBI:167181"/>
        <dbReference type="EC" id="4.2.99.18"/>
    </reaction>
</comment>
<comment type="cofactor">
    <cofactor evidence="2">
        <name>Zn(2+)</name>
        <dbReference type="ChEBI" id="CHEBI:29105"/>
    </cofactor>
    <text evidence="2">Binds 1 zinc ion per subunit.</text>
</comment>
<comment type="subunit">
    <text evidence="2">Monomer.</text>
</comment>
<comment type="similarity">
    <text evidence="2">Belongs to the FPG family.</text>
</comment>
<dbReference type="EC" id="3.2.2.23" evidence="2"/>
<dbReference type="EC" id="4.2.99.18" evidence="2"/>
<dbReference type="EMBL" id="CP000148">
    <property type="protein sequence ID" value="ABB31443.1"/>
    <property type="molecule type" value="Genomic_DNA"/>
</dbReference>
<dbReference type="RefSeq" id="WP_004512164.1">
    <property type="nucleotide sequence ID" value="NC_007517.1"/>
</dbReference>
<dbReference type="SMR" id="Q39WD1"/>
<dbReference type="STRING" id="269799.Gmet_1206"/>
<dbReference type="KEGG" id="gme:Gmet_1206"/>
<dbReference type="eggNOG" id="COG0266">
    <property type="taxonomic scope" value="Bacteria"/>
</dbReference>
<dbReference type="HOGENOM" id="CLU_038423_1_1_7"/>
<dbReference type="Proteomes" id="UP000007073">
    <property type="component" value="Chromosome"/>
</dbReference>
<dbReference type="GO" id="GO:0034039">
    <property type="term" value="F:8-oxo-7,8-dihydroguanine DNA N-glycosylase activity"/>
    <property type="evidence" value="ECO:0007669"/>
    <property type="project" value="TreeGrafter"/>
</dbReference>
<dbReference type="GO" id="GO:0140078">
    <property type="term" value="F:class I DNA-(apurinic or apyrimidinic site) endonuclease activity"/>
    <property type="evidence" value="ECO:0007669"/>
    <property type="project" value="UniProtKB-EC"/>
</dbReference>
<dbReference type="GO" id="GO:0003684">
    <property type="term" value="F:damaged DNA binding"/>
    <property type="evidence" value="ECO:0007669"/>
    <property type="project" value="InterPro"/>
</dbReference>
<dbReference type="GO" id="GO:0008270">
    <property type="term" value="F:zinc ion binding"/>
    <property type="evidence" value="ECO:0007669"/>
    <property type="project" value="UniProtKB-UniRule"/>
</dbReference>
<dbReference type="GO" id="GO:0006284">
    <property type="term" value="P:base-excision repair"/>
    <property type="evidence" value="ECO:0007669"/>
    <property type="project" value="InterPro"/>
</dbReference>
<dbReference type="CDD" id="cd08966">
    <property type="entry name" value="EcFpg-like_N"/>
    <property type="match status" value="1"/>
</dbReference>
<dbReference type="FunFam" id="1.10.8.50:FF:000003">
    <property type="entry name" value="Formamidopyrimidine-DNA glycosylase"/>
    <property type="match status" value="1"/>
</dbReference>
<dbReference type="FunFam" id="3.20.190.10:FF:000001">
    <property type="entry name" value="Formamidopyrimidine-DNA glycosylase"/>
    <property type="match status" value="1"/>
</dbReference>
<dbReference type="Gene3D" id="1.10.8.50">
    <property type="match status" value="1"/>
</dbReference>
<dbReference type="Gene3D" id="3.20.190.10">
    <property type="entry name" value="MutM-like, N-terminal"/>
    <property type="match status" value="1"/>
</dbReference>
<dbReference type="HAMAP" id="MF_00103">
    <property type="entry name" value="Fapy_DNA_glycosyl"/>
    <property type="match status" value="1"/>
</dbReference>
<dbReference type="InterPro" id="IPR015886">
    <property type="entry name" value="DNA_glyclase/AP_lyase_DNA-bd"/>
</dbReference>
<dbReference type="InterPro" id="IPR015887">
    <property type="entry name" value="DNA_glyclase_Znf_dom_DNA_BS"/>
</dbReference>
<dbReference type="InterPro" id="IPR020629">
    <property type="entry name" value="Formamido-pyr_DNA_Glyclase"/>
</dbReference>
<dbReference type="InterPro" id="IPR012319">
    <property type="entry name" value="FPG_cat"/>
</dbReference>
<dbReference type="InterPro" id="IPR035937">
    <property type="entry name" value="MutM-like_N-ter"/>
</dbReference>
<dbReference type="InterPro" id="IPR010979">
    <property type="entry name" value="Ribosomal_uS13-like_H2TH"/>
</dbReference>
<dbReference type="InterPro" id="IPR000214">
    <property type="entry name" value="Znf_DNA_glyclase/AP_lyase"/>
</dbReference>
<dbReference type="InterPro" id="IPR010663">
    <property type="entry name" value="Znf_FPG/IleRS"/>
</dbReference>
<dbReference type="NCBIfam" id="TIGR00577">
    <property type="entry name" value="fpg"/>
    <property type="match status" value="1"/>
</dbReference>
<dbReference type="NCBIfam" id="NF002211">
    <property type="entry name" value="PRK01103.1"/>
    <property type="match status" value="1"/>
</dbReference>
<dbReference type="PANTHER" id="PTHR22993">
    <property type="entry name" value="FORMAMIDOPYRIMIDINE-DNA GLYCOSYLASE"/>
    <property type="match status" value="1"/>
</dbReference>
<dbReference type="PANTHER" id="PTHR22993:SF9">
    <property type="entry name" value="FORMAMIDOPYRIMIDINE-DNA GLYCOSYLASE"/>
    <property type="match status" value="1"/>
</dbReference>
<dbReference type="Pfam" id="PF01149">
    <property type="entry name" value="Fapy_DNA_glyco"/>
    <property type="match status" value="1"/>
</dbReference>
<dbReference type="Pfam" id="PF06831">
    <property type="entry name" value="H2TH"/>
    <property type="match status" value="1"/>
</dbReference>
<dbReference type="Pfam" id="PF06827">
    <property type="entry name" value="zf-FPG_IleRS"/>
    <property type="match status" value="1"/>
</dbReference>
<dbReference type="SMART" id="SM00898">
    <property type="entry name" value="Fapy_DNA_glyco"/>
    <property type="match status" value="1"/>
</dbReference>
<dbReference type="SMART" id="SM01232">
    <property type="entry name" value="H2TH"/>
    <property type="match status" value="1"/>
</dbReference>
<dbReference type="SUPFAM" id="SSF57716">
    <property type="entry name" value="Glucocorticoid receptor-like (DNA-binding domain)"/>
    <property type="match status" value="1"/>
</dbReference>
<dbReference type="SUPFAM" id="SSF81624">
    <property type="entry name" value="N-terminal domain of MutM-like DNA repair proteins"/>
    <property type="match status" value="1"/>
</dbReference>
<dbReference type="SUPFAM" id="SSF46946">
    <property type="entry name" value="S13-like H2TH domain"/>
    <property type="match status" value="1"/>
</dbReference>
<dbReference type="PROSITE" id="PS51068">
    <property type="entry name" value="FPG_CAT"/>
    <property type="match status" value="1"/>
</dbReference>
<dbReference type="PROSITE" id="PS01242">
    <property type="entry name" value="ZF_FPG_1"/>
    <property type="match status" value="1"/>
</dbReference>
<dbReference type="PROSITE" id="PS51066">
    <property type="entry name" value="ZF_FPG_2"/>
    <property type="match status" value="1"/>
</dbReference>
<reference key="1">
    <citation type="journal article" date="2009" name="BMC Microbiol.">
        <title>The genome sequence of Geobacter metallireducens: features of metabolism, physiology and regulation common and dissimilar to Geobacter sulfurreducens.</title>
        <authorList>
            <person name="Aklujkar M."/>
            <person name="Krushkal J."/>
            <person name="DiBartolo G."/>
            <person name="Lapidus A."/>
            <person name="Land M.L."/>
            <person name="Lovley D.R."/>
        </authorList>
    </citation>
    <scope>NUCLEOTIDE SEQUENCE [LARGE SCALE GENOMIC DNA]</scope>
    <source>
        <strain>ATCC 53774 / DSM 7210 / GS-15</strain>
    </source>
</reference>
<gene>
    <name evidence="2" type="primary">mutM</name>
    <name evidence="2" type="synonym">fpg</name>
    <name type="ordered locus">Gmet_1206</name>
</gene>